<gene>
    <name evidence="1" type="primary">ileS</name>
    <name type="ordered locus">LMOf2365_2044</name>
</gene>
<comment type="function">
    <text evidence="1">Catalyzes the attachment of isoleucine to tRNA(Ile). As IleRS can inadvertently accommodate and process structurally similar amino acids such as valine, to avoid such errors it has two additional distinct tRNA(Ile)-dependent editing activities. One activity is designated as 'pretransfer' editing and involves the hydrolysis of activated Val-AMP. The other activity is designated 'posttransfer' editing and involves deacylation of mischarged Val-tRNA(Ile).</text>
</comment>
<comment type="catalytic activity">
    <reaction evidence="1">
        <text>tRNA(Ile) + L-isoleucine + ATP = L-isoleucyl-tRNA(Ile) + AMP + diphosphate</text>
        <dbReference type="Rhea" id="RHEA:11060"/>
        <dbReference type="Rhea" id="RHEA-COMP:9666"/>
        <dbReference type="Rhea" id="RHEA-COMP:9695"/>
        <dbReference type="ChEBI" id="CHEBI:30616"/>
        <dbReference type="ChEBI" id="CHEBI:33019"/>
        <dbReference type="ChEBI" id="CHEBI:58045"/>
        <dbReference type="ChEBI" id="CHEBI:78442"/>
        <dbReference type="ChEBI" id="CHEBI:78528"/>
        <dbReference type="ChEBI" id="CHEBI:456215"/>
        <dbReference type="EC" id="6.1.1.5"/>
    </reaction>
</comment>
<comment type="cofactor">
    <cofactor evidence="1">
        <name>Zn(2+)</name>
        <dbReference type="ChEBI" id="CHEBI:29105"/>
    </cofactor>
    <text evidence="1">Binds 1 zinc ion per subunit.</text>
</comment>
<comment type="subunit">
    <text evidence="1">Monomer.</text>
</comment>
<comment type="subcellular location">
    <subcellularLocation>
        <location evidence="1">Cytoplasm</location>
    </subcellularLocation>
</comment>
<comment type="domain">
    <text evidence="1">IleRS has two distinct active sites: one for aminoacylation and one for editing. The misactivated valine is translocated from the active site to the editing site, which sterically excludes the correctly activated isoleucine. The single editing site contains two valyl binding pockets, one specific for each substrate (Val-AMP or Val-tRNA(Ile)).</text>
</comment>
<comment type="similarity">
    <text evidence="1">Belongs to the class-I aminoacyl-tRNA synthetase family. IleS type 1 subfamily.</text>
</comment>
<evidence type="ECO:0000255" key="1">
    <source>
        <dbReference type="HAMAP-Rule" id="MF_02002"/>
    </source>
</evidence>
<proteinExistence type="inferred from homology"/>
<reference key="1">
    <citation type="journal article" date="2004" name="Nucleic Acids Res.">
        <title>Whole genome comparisons of serotype 4b and 1/2a strains of the food-borne pathogen Listeria monocytogenes reveal new insights into the core genome components of this species.</title>
        <authorList>
            <person name="Nelson K.E."/>
            <person name="Fouts D.E."/>
            <person name="Mongodin E.F."/>
            <person name="Ravel J."/>
            <person name="DeBoy R.T."/>
            <person name="Kolonay J.F."/>
            <person name="Rasko D.A."/>
            <person name="Angiuoli S.V."/>
            <person name="Gill S.R."/>
            <person name="Paulsen I.T."/>
            <person name="Peterson J.D."/>
            <person name="White O."/>
            <person name="Nelson W.C."/>
            <person name="Nierman W.C."/>
            <person name="Beanan M.J."/>
            <person name="Brinkac L.M."/>
            <person name="Daugherty S.C."/>
            <person name="Dodson R.J."/>
            <person name="Durkin A.S."/>
            <person name="Madupu R."/>
            <person name="Haft D.H."/>
            <person name="Selengut J."/>
            <person name="Van Aken S.E."/>
            <person name="Khouri H.M."/>
            <person name="Fedorova N."/>
            <person name="Forberger H.A."/>
            <person name="Tran B."/>
            <person name="Kathariou S."/>
            <person name="Wonderling L.D."/>
            <person name="Uhlich G.A."/>
            <person name="Bayles D.O."/>
            <person name="Luchansky J.B."/>
            <person name="Fraser C.M."/>
        </authorList>
    </citation>
    <scope>NUCLEOTIDE SEQUENCE [LARGE SCALE GENOMIC DNA]</scope>
    <source>
        <strain>F2365</strain>
    </source>
</reference>
<keyword id="KW-0030">Aminoacyl-tRNA synthetase</keyword>
<keyword id="KW-0067">ATP-binding</keyword>
<keyword id="KW-0963">Cytoplasm</keyword>
<keyword id="KW-0436">Ligase</keyword>
<keyword id="KW-0479">Metal-binding</keyword>
<keyword id="KW-0547">Nucleotide-binding</keyword>
<keyword id="KW-0648">Protein biosynthesis</keyword>
<keyword id="KW-0862">Zinc</keyword>
<name>SYI_LISMF</name>
<sequence>MEYKDTLLMPKTDFPMRGNLPNKEPEWQAKWEEEKLYEKIQEKNAGRKAYILHDGPPYANGELHMGHALNKTIKDIIVRYKSMAGFSSPYVPGWDTHGLPIETAIAKKGVKRKEMSIAEFRKLCAEYAMTQVDGQRTGFKRLGINGDWENPYITLLPEYEAEQIKVFGEMAKKGYIYKGKKPVYWSPSSESALAEAEIEYQDKKSASIFVAFKVTDGKGVLDEGTNIVIWTTTPWTIPANMGITVNPDLDYVVIESAGEKYVVAEALLPSLREKLGFEDATVVKTVRGSELDRVVTKHPFYDRDSLVMNGEHATAEAGTGAVHTAPGHGEDDFLIGKKYDLEVLAPLDDRGVFTEEAPGFEGVFYDTANKMVTEKLEEVGALLKMEFITHSYPHDWRTKKPVIFRATAQWFASIDAFRDDLLAAVKGVNWTPAWGETRLFNMVRDRGDWVISRQRAWGVPLPIFYAENGEAIITDETINHISELFREHGSNVWFERDVKDLLPAGFTHPGSPNGEFTKETDIMDVWFDSGSSHQAVLNARPELSRPADLYMEGSDQYRGWFNSSLTTAVAITGEAPYRNVLSHGFALDGEGRKMSKSLGNTLLPGKVIKQLGADIVRLWVASVDYQADVRVSDEILKQVSEVYRKIRNTMRFLLGNINDFNPTTNAVSYENLREVDKYMLIKLNDLVKNVKDNYEAFEFSTIYHQINNFCTVELSQFYMDFAKDVVYIEAADSHDRRAMQTVFYEAVVTLTKLLAPILPHTTEEVWNSLIGEGVESIHLQDLPEVKVLADSEEITAKWDAFMQIRDNVQKALEFARNEKLIGKSMLAKVTLYVDGEAKTLFDSLEGDFAQLFIVSDFELVEGLENAPESAFKSNQVAVQITVAEGETCERCRVVKKDVGVNPKHPTLCGRCADIVVKHYEA</sequence>
<accession>Q71Y01</accession>
<dbReference type="EC" id="6.1.1.5" evidence="1"/>
<dbReference type="EMBL" id="AE017262">
    <property type="protein sequence ID" value="AAT04814.1"/>
    <property type="molecule type" value="Genomic_DNA"/>
</dbReference>
<dbReference type="RefSeq" id="WP_003727956.1">
    <property type="nucleotide sequence ID" value="NC_002973.6"/>
</dbReference>
<dbReference type="SMR" id="Q71Y01"/>
<dbReference type="KEGG" id="lmf:LMOf2365_2044"/>
<dbReference type="HOGENOM" id="CLU_001493_7_1_9"/>
<dbReference type="GO" id="GO:0005829">
    <property type="term" value="C:cytosol"/>
    <property type="evidence" value="ECO:0007669"/>
    <property type="project" value="TreeGrafter"/>
</dbReference>
<dbReference type="GO" id="GO:0002161">
    <property type="term" value="F:aminoacyl-tRNA deacylase activity"/>
    <property type="evidence" value="ECO:0007669"/>
    <property type="project" value="InterPro"/>
</dbReference>
<dbReference type="GO" id="GO:0005524">
    <property type="term" value="F:ATP binding"/>
    <property type="evidence" value="ECO:0007669"/>
    <property type="project" value="UniProtKB-UniRule"/>
</dbReference>
<dbReference type="GO" id="GO:0004822">
    <property type="term" value="F:isoleucine-tRNA ligase activity"/>
    <property type="evidence" value="ECO:0007669"/>
    <property type="project" value="UniProtKB-UniRule"/>
</dbReference>
<dbReference type="GO" id="GO:0000049">
    <property type="term" value="F:tRNA binding"/>
    <property type="evidence" value="ECO:0007669"/>
    <property type="project" value="InterPro"/>
</dbReference>
<dbReference type="GO" id="GO:0008270">
    <property type="term" value="F:zinc ion binding"/>
    <property type="evidence" value="ECO:0007669"/>
    <property type="project" value="UniProtKB-UniRule"/>
</dbReference>
<dbReference type="GO" id="GO:0006428">
    <property type="term" value="P:isoleucyl-tRNA aminoacylation"/>
    <property type="evidence" value="ECO:0007669"/>
    <property type="project" value="UniProtKB-UniRule"/>
</dbReference>
<dbReference type="CDD" id="cd07960">
    <property type="entry name" value="Anticodon_Ia_Ile_BEm"/>
    <property type="match status" value="1"/>
</dbReference>
<dbReference type="CDD" id="cd00818">
    <property type="entry name" value="IleRS_core"/>
    <property type="match status" value="1"/>
</dbReference>
<dbReference type="FunFam" id="1.10.10.830:FF:000001">
    <property type="entry name" value="Isoleucine--tRNA ligase"/>
    <property type="match status" value="1"/>
</dbReference>
<dbReference type="FunFam" id="1.10.730.20:FF:000001">
    <property type="entry name" value="Isoleucine--tRNA ligase"/>
    <property type="match status" value="1"/>
</dbReference>
<dbReference type="FunFam" id="3.40.50.620:FF:000152">
    <property type="entry name" value="Isoleucine--tRNA ligase"/>
    <property type="match status" value="1"/>
</dbReference>
<dbReference type="FunFam" id="3.90.740.10:FF:000006">
    <property type="entry name" value="Isoleucine--tRNA ligase"/>
    <property type="match status" value="1"/>
</dbReference>
<dbReference type="Gene3D" id="1.10.730.20">
    <property type="match status" value="1"/>
</dbReference>
<dbReference type="Gene3D" id="3.40.50.620">
    <property type="entry name" value="HUPs"/>
    <property type="match status" value="2"/>
</dbReference>
<dbReference type="Gene3D" id="1.10.10.830">
    <property type="entry name" value="Ile-tRNA synthetase CP2 domain-like"/>
    <property type="match status" value="1"/>
</dbReference>
<dbReference type="HAMAP" id="MF_02002">
    <property type="entry name" value="Ile_tRNA_synth_type1"/>
    <property type="match status" value="1"/>
</dbReference>
<dbReference type="InterPro" id="IPR001412">
    <property type="entry name" value="aa-tRNA-synth_I_CS"/>
</dbReference>
<dbReference type="InterPro" id="IPR002300">
    <property type="entry name" value="aa-tRNA-synth_Ia"/>
</dbReference>
<dbReference type="InterPro" id="IPR033708">
    <property type="entry name" value="Anticodon_Ile_BEm"/>
</dbReference>
<dbReference type="InterPro" id="IPR002301">
    <property type="entry name" value="Ile-tRNA-ligase"/>
</dbReference>
<dbReference type="InterPro" id="IPR023585">
    <property type="entry name" value="Ile-tRNA-ligase_type1"/>
</dbReference>
<dbReference type="InterPro" id="IPR050081">
    <property type="entry name" value="Ile-tRNA_ligase"/>
</dbReference>
<dbReference type="InterPro" id="IPR013155">
    <property type="entry name" value="M/V/L/I-tRNA-synth_anticd-bd"/>
</dbReference>
<dbReference type="InterPro" id="IPR014729">
    <property type="entry name" value="Rossmann-like_a/b/a_fold"/>
</dbReference>
<dbReference type="InterPro" id="IPR009080">
    <property type="entry name" value="tRNAsynth_Ia_anticodon-bd"/>
</dbReference>
<dbReference type="InterPro" id="IPR009008">
    <property type="entry name" value="Val/Leu/Ile-tRNA-synth_edit"/>
</dbReference>
<dbReference type="InterPro" id="IPR010663">
    <property type="entry name" value="Znf_FPG/IleRS"/>
</dbReference>
<dbReference type="NCBIfam" id="TIGR00392">
    <property type="entry name" value="ileS"/>
    <property type="match status" value="1"/>
</dbReference>
<dbReference type="PANTHER" id="PTHR42765:SF1">
    <property type="entry name" value="ISOLEUCINE--TRNA LIGASE, MITOCHONDRIAL"/>
    <property type="match status" value="1"/>
</dbReference>
<dbReference type="PANTHER" id="PTHR42765">
    <property type="entry name" value="SOLEUCYL-TRNA SYNTHETASE"/>
    <property type="match status" value="1"/>
</dbReference>
<dbReference type="Pfam" id="PF08264">
    <property type="entry name" value="Anticodon_1"/>
    <property type="match status" value="1"/>
</dbReference>
<dbReference type="Pfam" id="PF00133">
    <property type="entry name" value="tRNA-synt_1"/>
    <property type="match status" value="1"/>
</dbReference>
<dbReference type="Pfam" id="PF06827">
    <property type="entry name" value="zf-FPG_IleRS"/>
    <property type="match status" value="1"/>
</dbReference>
<dbReference type="PRINTS" id="PR00984">
    <property type="entry name" value="TRNASYNTHILE"/>
</dbReference>
<dbReference type="SUPFAM" id="SSF47323">
    <property type="entry name" value="Anticodon-binding domain of a subclass of class I aminoacyl-tRNA synthetases"/>
    <property type="match status" value="1"/>
</dbReference>
<dbReference type="SUPFAM" id="SSF52374">
    <property type="entry name" value="Nucleotidylyl transferase"/>
    <property type="match status" value="1"/>
</dbReference>
<dbReference type="SUPFAM" id="SSF50677">
    <property type="entry name" value="ValRS/IleRS/LeuRS editing domain"/>
    <property type="match status" value="1"/>
</dbReference>
<dbReference type="PROSITE" id="PS00178">
    <property type="entry name" value="AA_TRNA_LIGASE_I"/>
    <property type="match status" value="1"/>
</dbReference>
<organism>
    <name type="scientific">Listeria monocytogenes serotype 4b (strain F2365)</name>
    <dbReference type="NCBI Taxonomy" id="265669"/>
    <lineage>
        <taxon>Bacteria</taxon>
        <taxon>Bacillati</taxon>
        <taxon>Bacillota</taxon>
        <taxon>Bacilli</taxon>
        <taxon>Bacillales</taxon>
        <taxon>Listeriaceae</taxon>
        <taxon>Listeria</taxon>
    </lineage>
</organism>
<feature type="chain" id="PRO_0000098412" description="Isoleucine--tRNA ligase">
    <location>
        <begin position="1"/>
        <end position="921"/>
    </location>
</feature>
<feature type="short sequence motif" description="'HIGH' region">
    <location>
        <begin position="57"/>
        <end position="67"/>
    </location>
</feature>
<feature type="short sequence motif" description="'KMSKS' region">
    <location>
        <begin position="593"/>
        <end position="597"/>
    </location>
</feature>
<feature type="binding site" evidence="1">
    <location>
        <position position="552"/>
    </location>
    <ligand>
        <name>L-isoleucyl-5'-AMP</name>
        <dbReference type="ChEBI" id="CHEBI:178002"/>
    </ligand>
</feature>
<feature type="binding site" evidence="1">
    <location>
        <position position="596"/>
    </location>
    <ligand>
        <name>ATP</name>
        <dbReference type="ChEBI" id="CHEBI:30616"/>
    </ligand>
</feature>
<feature type="binding site" evidence="1">
    <location>
        <position position="888"/>
    </location>
    <ligand>
        <name>Zn(2+)</name>
        <dbReference type="ChEBI" id="CHEBI:29105"/>
    </ligand>
</feature>
<feature type="binding site" evidence="1">
    <location>
        <position position="891"/>
    </location>
    <ligand>
        <name>Zn(2+)</name>
        <dbReference type="ChEBI" id="CHEBI:29105"/>
    </ligand>
</feature>
<feature type="binding site" evidence="1">
    <location>
        <position position="908"/>
    </location>
    <ligand>
        <name>Zn(2+)</name>
        <dbReference type="ChEBI" id="CHEBI:29105"/>
    </ligand>
</feature>
<feature type="binding site" evidence="1">
    <location>
        <position position="911"/>
    </location>
    <ligand>
        <name>Zn(2+)</name>
        <dbReference type="ChEBI" id="CHEBI:29105"/>
    </ligand>
</feature>
<protein>
    <recommendedName>
        <fullName evidence="1">Isoleucine--tRNA ligase</fullName>
        <ecNumber evidence="1">6.1.1.5</ecNumber>
    </recommendedName>
    <alternativeName>
        <fullName evidence="1">Isoleucyl-tRNA synthetase</fullName>
        <shortName evidence="1">IleRS</shortName>
    </alternativeName>
</protein>